<accession>A8YYG1</accession>
<organism>
    <name type="scientific">Staphylococcus aureus (strain USA300 / TCH1516)</name>
    <dbReference type="NCBI Taxonomy" id="451516"/>
    <lineage>
        <taxon>Bacteria</taxon>
        <taxon>Bacillati</taxon>
        <taxon>Bacillota</taxon>
        <taxon>Bacilli</taxon>
        <taxon>Bacillales</taxon>
        <taxon>Staphylococcaceae</taxon>
        <taxon>Staphylococcus</taxon>
    </lineage>
</organism>
<proteinExistence type="inferred from homology"/>
<name>LACB_STAAT</name>
<reference key="1">
    <citation type="journal article" date="2007" name="BMC Microbiol.">
        <title>Subtle genetic changes enhance virulence of methicillin resistant and sensitive Staphylococcus aureus.</title>
        <authorList>
            <person name="Highlander S.K."/>
            <person name="Hulten K.G."/>
            <person name="Qin X."/>
            <person name="Jiang H."/>
            <person name="Yerrapragada S."/>
            <person name="Mason E.O. Jr."/>
            <person name="Shang Y."/>
            <person name="Williams T.M."/>
            <person name="Fortunov R.M."/>
            <person name="Liu Y."/>
            <person name="Igboeli O."/>
            <person name="Petrosino J."/>
            <person name="Tirumalai M."/>
            <person name="Uzman A."/>
            <person name="Fox G.E."/>
            <person name="Cardenas A.M."/>
            <person name="Muzny D.M."/>
            <person name="Hemphill L."/>
            <person name="Ding Y."/>
            <person name="Dugan S."/>
            <person name="Blyth P.R."/>
            <person name="Buhay C.J."/>
            <person name="Dinh H.H."/>
            <person name="Hawes A.C."/>
            <person name="Holder M."/>
            <person name="Kovar C.L."/>
            <person name="Lee S.L."/>
            <person name="Liu W."/>
            <person name="Nazareth L.V."/>
            <person name="Wang Q."/>
            <person name="Zhou J."/>
            <person name="Kaplan S.L."/>
            <person name="Weinstock G.M."/>
        </authorList>
    </citation>
    <scope>NUCLEOTIDE SEQUENCE [LARGE SCALE GENOMIC DNA]</scope>
    <source>
        <strain>USA300 / TCH1516</strain>
    </source>
</reference>
<protein>
    <recommendedName>
        <fullName evidence="1">Galactose-6-phosphate isomerase subunit LacB</fullName>
        <ecNumber evidence="1">5.3.1.26</ecNumber>
    </recommendedName>
</protein>
<feature type="chain" id="PRO_1000087789" description="Galactose-6-phosphate isomerase subunit LacB">
    <location>
        <begin position="1"/>
        <end position="171"/>
    </location>
</feature>
<comment type="catalytic activity">
    <reaction evidence="1">
        <text>aldehydo-D-galactose 6-phosphate = keto-D-tagatose 6-phosphate</text>
        <dbReference type="Rhea" id="RHEA:13033"/>
        <dbReference type="ChEBI" id="CHEBI:58255"/>
        <dbReference type="ChEBI" id="CHEBI:134283"/>
        <dbReference type="EC" id="5.3.1.26"/>
    </reaction>
</comment>
<comment type="pathway">
    <text evidence="1">Carbohydrate metabolism; D-galactose 6-phosphate degradation; D-tagatose 6-phosphate from D-galactose 6-phosphate: step 1/1.</text>
</comment>
<comment type="subunit">
    <text evidence="1">Heteromultimeric protein consisting of LacA and LacB.</text>
</comment>
<comment type="similarity">
    <text evidence="1">Belongs to the LacAB/RpiB family.</text>
</comment>
<keyword id="KW-0413">Isomerase</keyword>
<keyword id="KW-0423">Lactose metabolism</keyword>
<sequence length="171" mass="18951">MKIALGCDHIVTDTKMRVSEFLKSKGHEVIDVGTYDFTRTHYPIFGKKVGEQVVSGNADLGVCICGTGVGINNAVNKVPGVRSALVRDMTSALYAKEELNANVIGFGGRIIGELLMCDIIDAFINAEYKPTEENKKLIAKIKHLETSNADQADPHFFDEFLEKWDRGEYHD</sequence>
<dbReference type="EC" id="5.3.1.26" evidence="1"/>
<dbReference type="EMBL" id="CP000730">
    <property type="protein sequence ID" value="ABX30181.1"/>
    <property type="molecule type" value="Genomic_DNA"/>
</dbReference>
<dbReference type="RefSeq" id="WP_000684746.1">
    <property type="nucleotide sequence ID" value="NC_010079.1"/>
</dbReference>
<dbReference type="SMR" id="A8YYG1"/>
<dbReference type="KEGG" id="sax:USA300HOU_2187"/>
<dbReference type="HOGENOM" id="CLU_091396_2_0_9"/>
<dbReference type="UniPathway" id="UPA00702">
    <property type="reaction ID" value="UER00714"/>
</dbReference>
<dbReference type="GO" id="GO:0050044">
    <property type="term" value="F:galactose-6-phosphate isomerase activity"/>
    <property type="evidence" value="ECO:0007669"/>
    <property type="project" value="UniProtKB-UniRule"/>
</dbReference>
<dbReference type="GO" id="GO:0004751">
    <property type="term" value="F:ribose-5-phosphate isomerase activity"/>
    <property type="evidence" value="ECO:0007669"/>
    <property type="project" value="TreeGrafter"/>
</dbReference>
<dbReference type="GO" id="GO:0019316">
    <property type="term" value="P:D-allose catabolic process"/>
    <property type="evidence" value="ECO:0007669"/>
    <property type="project" value="TreeGrafter"/>
</dbReference>
<dbReference type="GO" id="GO:0019388">
    <property type="term" value="P:galactose catabolic process"/>
    <property type="evidence" value="ECO:0007669"/>
    <property type="project" value="UniProtKB-UniPathway"/>
</dbReference>
<dbReference type="GO" id="GO:0019512">
    <property type="term" value="P:lactose catabolic process via tagatose-6-phosphate"/>
    <property type="evidence" value="ECO:0007669"/>
    <property type="project" value="UniProtKB-UniRule"/>
</dbReference>
<dbReference type="GO" id="GO:0009052">
    <property type="term" value="P:pentose-phosphate shunt, non-oxidative branch"/>
    <property type="evidence" value="ECO:0007669"/>
    <property type="project" value="TreeGrafter"/>
</dbReference>
<dbReference type="Gene3D" id="3.40.1400.10">
    <property type="entry name" value="Sugar-phosphate isomerase, RpiB/LacA/LacB"/>
    <property type="match status" value="1"/>
</dbReference>
<dbReference type="HAMAP" id="MF_01556">
    <property type="entry name" value="LacB"/>
    <property type="match status" value="1"/>
</dbReference>
<dbReference type="InterPro" id="IPR004784">
    <property type="entry name" value="LacB"/>
</dbReference>
<dbReference type="InterPro" id="IPR003500">
    <property type="entry name" value="RpiB_LacA_LacB"/>
</dbReference>
<dbReference type="InterPro" id="IPR036569">
    <property type="entry name" value="RpiB_LacA_LacB_sf"/>
</dbReference>
<dbReference type="NCBIfam" id="TIGR01119">
    <property type="entry name" value="lacB"/>
    <property type="match status" value="1"/>
</dbReference>
<dbReference type="NCBIfam" id="NF004051">
    <property type="entry name" value="PRK05571.1"/>
    <property type="match status" value="1"/>
</dbReference>
<dbReference type="NCBIfam" id="NF006381">
    <property type="entry name" value="PRK08622.1"/>
    <property type="match status" value="1"/>
</dbReference>
<dbReference type="NCBIfam" id="NF009258">
    <property type="entry name" value="PRK12615.1"/>
    <property type="match status" value="1"/>
</dbReference>
<dbReference type="NCBIfam" id="TIGR00689">
    <property type="entry name" value="rpiB_lacA_lacB"/>
    <property type="match status" value="1"/>
</dbReference>
<dbReference type="PANTHER" id="PTHR30345:SF0">
    <property type="entry name" value="DNA DAMAGE-REPAIR_TOLERATION PROTEIN DRT102"/>
    <property type="match status" value="1"/>
</dbReference>
<dbReference type="PANTHER" id="PTHR30345">
    <property type="entry name" value="RIBOSE-5-PHOSPHATE ISOMERASE B"/>
    <property type="match status" value="1"/>
</dbReference>
<dbReference type="Pfam" id="PF02502">
    <property type="entry name" value="LacAB_rpiB"/>
    <property type="match status" value="1"/>
</dbReference>
<dbReference type="PIRSF" id="PIRSF005384">
    <property type="entry name" value="RpiB_LacA_B"/>
    <property type="match status" value="1"/>
</dbReference>
<dbReference type="SUPFAM" id="SSF89623">
    <property type="entry name" value="Ribose/Galactose isomerase RpiB/AlsB"/>
    <property type="match status" value="1"/>
</dbReference>
<gene>
    <name evidence="1" type="primary">lacB</name>
    <name type="ordered locus">USA300HOU_2187</name>
</gene>
<evidence type="ECO:0000255" key="1">
    <source>
        <dbReference type="HAMAP-Rule" id="MF_01556"/>
    </source>
</evidence>